<evidence type="ECO:0000269" key="1">
    <source>
    </source>
</evidence>
<evidence type="ECO:0000303" key="2">
    <source>
    </source>
</evidence>
<name>YNFP_ECOLI</name>
<reference key="1">
    <citation type="journal article" date="1997" name="Science">
        <title>The complete genome sequence of Escherichia coli K-12.</title>
        <authorList>
            <person name="Blattner F.R."/>
            <person name="Plunkett G. III"/>
            <person name="Bloch C.A."/>
            <person name="Perna N.T."/>
            <person name="Burland V."/>
            <person name="Riley M."/>
            <person name="Collado-Vides J."/>
            <person name="Glasner J.D."/>
            <person name="Rode C.K."/>
            <person name="Mayhew G.F."/>
            <person name="Gregor J."/>
            <person name="Davis N.W."/>
            <person name="Kirkpatrick H.A."/>
            <person name="Goeden M.A."/>
            <person name="Rose D.J."/>
            <person name="Mau B."/>
            <person name="Shao Y."/>
        </authorList>
    </citation>
    <scope>NUCLEOTIDE SEQUENCE [LARGE SCALE GENOMIC DNA]</scope>
    <source>
        <strain>K12 / MG1655 / ATCC 47076</strain>
    </source>
</reference>
<reference key="2">
    <citation type="journal article" date="2018" name="Proteomics">
        <title>Identifying new small proteins in Escherichia coli.</title>
        <authorList>
            <person name="VanOrsdel C.E."/>
            <person name="Kelly J.P."/>
            <person name="Burke B.N."/>
            <person name="Lein C.D."/>
            <person name="Oufiero C.E."/>
            <person name="Sanchez J.F."/>
            <person name="Wimmers L.E."/>
            <person name="Hearn D.J."/>
            <person name="Abuikhdair F.J."/>
            <person name="Barnhart K.R."/>
            <person name="Duley M.L."/>
            <person name="Ernst S.E.G."/>
            <person name="Kenerson B.A."/>
            <person name="Serafin A.J."/>
            <person name="Hemm M.R."/>
        </authorList>
    </citation>
    <scope>IDENTIFICATION</scope>
    <scope>INDUCTION</scope>
</reference>
<protein>
    <recommendedName>
        <fullName evidence="2">Protein YnfP</fullName>
    </recommendedName>
</protein>
<keyword id="KW-1185">Reference proteome</keyword>
<gene>
    <name evidence="2" type="primary">ynfP</name>
    <name type="synonym">ydfJ_1</name>
    <name type="ordered locus">b4534</name>
</gene>
<comment type="induction">
    <text evidence="1">Expressed at low levels in stationary phase (at protein level).</text>
</comment>
<dbReference type="EMBL" id="U00096">
    <property type="protein sequence ID" value="AYC08222.1"/>
    <property type="molecule type" value="Genomic_DNA"/>
</dbReference>
<dbReference type="EnsemblBacteria" id="AYC08222">
    <property type="protein sequence ID" value="AYC08222"/>
    <property type="gene ID" value="b4534"/>
</dbReference>
<dbReference type="InParanoid" id="P0DPP1"/>
<dbReference type="BioCyc" id="EcoCyc:MONOMER0-4428"/>
<dbReference type="PRO" id="PR:P0DPP1"/>
<dbReference type="Proteomes" id="UP000000625">
    <property type="component" value="Chromosome"/>
</dbReference>
<feature type="chain" id="PRO_0000445179" description="Protein YnfP">
    <location>
        <begin position="1"/>
        <end position="36"/>
    </location>
</feature>
<proteinExistence type="evidence at protein level"/>
<accession>P0DPP1</accession>
<accession>A0A385XN87</accession>
<sequence length="36" mass="4039">MTIEKHERSTKDLVKAAVSGWLGTALEFMDFKSHAC</sequence>
<organism>
    <name type="scientific">Escherichia coli (strain K12)</name>
    <dbReference type="NCBI Taxonomy" id="83333"/>
    <lineage>
        <taxon>Bacteria</taxon>
        <taxon>Pseudomonadati</taxon>
        <taxon>Pseudomonadota</taxon>
        <taxon>Gammaproteobacteria</taxon>
        <taxon>Enterobacterales</taxon>
        <taxon>Enterobacteriaceae</taxon>
        <taxon>Escherichia</taxon>
    </lineage>
</organism>